<accession>Q3KBQ0</accession>
<proteinExistence type="inferred from homology"/>
<reference key="1">
    <citation type="journal article" date="2009" name="Genome Biol.">
        <title>Genomic and genetic analyses of diversity and plant interactions of Pseudomonas fluorescens.</title>
        <authorList>
            <person name="Silby M.W."/>
            <person name="Cerdeno-Tarraga A.M."/>
            <person name="Vernikos G.S."/>
            <person name="Giddens S.R."/>
            <person name="Jackson R.W."/>
            <person name="Preston G.M."/>
            <person name="Zhang X.-X."/>
            <person name="Moon C.D."/>
            <person name="Gehrig S.M."/>
            <person name="Godfrey S.A.C."/>
            <person name="Knight C.G."/>
            <person name="Malone J.G."/>
            <person name="Robinson Z."/>
            <person name="Spiers A.J."/>
            <person name="Harris S."/>
            <person name="Challis G.L."/>
            <person name="Yaxley A.M."/>
            <person name="Harris D."/>
            <person name="Seeger K."/>
            <person name="Murphy L."/>
            <person name="Rutter S."/>
            <person name="Squares R."/>
            <person name="Quail M.A."/>
            <person name="Saunders E."/>
            <person name="Mavromatis K."/>
            <person name="Brettin T.S."/>
            <person name="Bentley S.D."/>
            <person name="Hothersall J."/>
            <person name="Stephens E."/>
            <person name="Thomas C.M."/>
            <person name="Parkhill J."/>
            <person name="Levy S.B."/>
            <person name="Rainey P.B."/>
            <person name="Thomson N.R."/>
        </authorList>
    </citation>
    <scope>NUCLEOTIDE SEQUENCE [LARGE SCALE GENOMIC DNA]</scope>
    <source>
        <strain>Pf0-1</strain>
    </source>
</reference>
<evidence type="ECO:0000255" key="1">
    <source>
        <dbReference type="HAMAP-Rule" id="MF_00203"/>
    </source>
</evidence>
<gene>
    <name evidence="1" type="primary">uvrC</name>
    <name type="ordered locus">Pfl01_3066</name>
</gene>
<comment type="function">
    <text evidence="1">The UvrABC repair system catalyzes the recognition and processing of DNA lesions. UvrC both incises the 5' and 3' sides of the lesion. The N-terminal half is responsible for the 3' incision and the C-terminal half is responsible for the 5' incision.</text>
</comment>
<comment type="subunit">
    <text evidence="1">Interacts with UvrB in an incision complex.</text>
</comment>
<comment type="subcellular location">
    <subcellularLocation>
        <location evidence="1">Cytoplasm</location>
    </subcellularLocation>
</comment>
<comment type="similarity">
    <text evidence="1">Belongs to the UvrC family.</text>
</comment>
<sequence>MTEAFDSGAFLSTVSGRPGVYRMFDSDARLLYVGKAKSLKKRLASYFRKTGLAPKTAALVGRIAQVETTITSNETEALLLEQTLIKEWRPPYNILLRDDKSYPYVFLSDGQFPRLSIHRGAKKAKGKYFGPYPSAGAIRESLSLLQKTFFVRQCEDSYYKNRTRPCLQYQIKRCKAPCVGLVEPEVYAEDVRHSVMFLEGRSHALTNELSTAMEEAAINLEFERAAELRDQIALLRRVQDQQSMEGGTGDIDVIAAFVNPGGACVHLISVRGGRVLGSKNFFPQVGIEEEVAEVMAAFLGQYFISSPERDLPSELIVNVVHEDFPALIEAIQALRGRELSISHRVRGTRARWQQLAVTNAEQALGARLANRQHVAARFEALAEVLNLDEPPQRLECYDISHSSGEATVASCVVFGPEGAIKSDYRRYNIEGVTAGDDYAAMHQALTRRFSKLKEGEGKLPDILLVDGGKGQLSMARDVLNELAVPDLILLGVAKGATRKAGFETLYLNDAANEFTLRGDSPALHLIQQIRDEAHRFAITGHRARRGKTRRTSTLEGVAGVGPTRRRDLLKHFGGLQELSRASIEEIAKAPGISKKLAESIYANLHSE</sequence>
<keyword id="KW-0963">Cytoplasm</keyword>
<keyword id="KW-0227">DNA damage</keyword>
<keyword id="KW-0228">DNA excision</keyword>
<keyword id="KW-0234">DNA repair</keyword>
<keyword id="KW-0267">Excision nuclease</keyword>
<keyword id="KW-0742">SOS response</keyword>
<protein>
    <recommendedName>
        <fullName evidence="1">UvrABC system protein C</fullName>
        <shortName evidence="1">Protein UvrC</shortName>
    </recommendedName>
    <alternativeName>
        <fullName evidence="1">Excinuclease ABC subunit C</fullName>
    </alternativeName>
</protein>
<name>UVRC_PSEPF</name>
<feature type="chain" id="PRO_0000227463" description="UvrABC system protein C">
    <location>
        <begin position="1"/>
        <end position="607"/>
    </location>
</feature>
<feature type="domain" description="GIY-YIG" evidence="1">
    <location>
        <begin position="16"/>
        <end position="94"/>
    </location>
</feature>
<feature type="domain" description="UVR" evidence="1">
    <location>
        <begin position="203"/>
        <end position="238"/>
    </location>
</feature>
<dbReference type="EMBL" id="CP000094">
    <property type="protein sequence ID" value="ABA74804.1"/>
    <property type="molecule type" value="Genomic_DNA"/>
</dbReference>
<dbReference type="RefSeq" id="WP_011334462.1">
    <property type="nucleotide sequence ID" value="NC_007492.2"/>
</dbReference>
<dbReference type="SMR" id="Q3KBQ0"/>
<dbReference type="KEGG" id="pfo:Pfl01_3066"/>
<dbReference type="eggNOG" id="COG0322">
    <property type="taxonomic scope" value="Bacteria"/>
</dbReference>
<dbReference type="HOGENOM" id="CLU_014841_3_0_6"/>
<dbReference type="Proteomes" id="UP000002704">
    <property type="component" value="Chromosome"/>
</dbReference>
<dbReference type="GO" id="GO:0005737">
    <property type="term" value="C:cytoplasm"/>
    <property type="evidence" value="ECO:0007669"/>
    <property type="project" value="UniProtKB-SubCell"/>
</dbReference>
<dbReference type="GO" id="GO:0009380">
    <property type="term" value="C:excinuclease repair complex"/>
    <property type="evidence" value="ECO:0007669"/>
    <property type="project" value="InterPro"/>
</dbReference>
<dbReference type="GO" id="GO:0003677">
    <property type="term" value="F:DNA binding"/>
    <property type="evidence" value="ECO:0007669"/>
    <property type="project" value="UniProtKB-UniRule"/>
</dbReference>
<dbReference type="GO" id="GO:0009381">
    <property type="term" value="F:excinuclease ABC activity"/>
    <property type="evidence" value="ECO:0007669"/>
    <property type="project" value="UniProtKB-UniRule"/>
</dbReference>
<dbReference type="GO" id="GO:0006289">
    <property type="term" value="P:nucleotide-excision repair"/>
    <property type="evidence" value="ECO:0007669"/>
    <property type="project" value="UniProtKB-UniRule"/>
</dbReference>
<dbReference type="GO" id="GO:0009432">
    <property type="term" value="P:SOS response"/>
    <property type="evidence" value="ECO:0007669"/>
    <property type="project" value="UniProtKB-UniRule"/>
</dbReference>
<dbReference type="CDD" id="cd10434">
    <property type="entry name" value="GIY-YIG_UvrC_Cho"/>
    <property type="match status" value="1"/>
</dbReference>
<dbReference type="FunFam" id="1.10.150.20:FF:000005">
    <property type="entry name" value="UvrABC system protein C"/>
    <property type="match status" value="1"/>
</dbReference>
<dbReference type="FunFam" id="3.30.420.340:FF:000001">
    <property type="entry name" value="UvrABC system protein C"/>
    <property type="match status" value="1"/>
</dbReference>
<dbReference type="FunFam" id="3.40.1440.10:FF:000001">
    <property type="entry name" value="UvrABC system protein C"/>
    <property type="match status" value="1"/>
</dbReference>
<dbReference type="Gene3D" id="1.10.150.20">
    <property type="entry name" value="5' to 3' exonuclease, C-terminal subdomain"/>
    <property type="match status" value="1"/>
</dbReference>
<dbReference type="Gene3D" id="3.40.1440.10">
    <property type="entry name" value="GIY-YIG endonuclease"/>
    <property type="match status" value="1"/>
</dbReference>
<dbReference type="Gene3D" id="4.10.860.10">
    <property type="entry name" value="UVR domain"/>
    <property type="match status" value="1"/>
</dbReference>
<dbReference type="Gene3D" id="3.30.420.340">
    <property type="entry name" value="UvrC, RNAse H endonuclease domain"/>
    <property type="match status" value="1"/>
</dbReference>
<dbReference type="HAMAP" id="MF_00203">
    <property type="entry name" value="UvrC"/>
    <property type="match status" value="1"/>
</dbReference>
<dbReference type="InterPro" id="IPR000305">
    <property type="entry name" value="GIY-YIG_endonuc"/>
</dbReference>
<dbReference type="InterPro" id="IPR035901">
    <property type="entry name" value="GIY-YIG_endonuc_sf"/>
</dbReference>
<dbReference type="InterPro" id="IPR047296">
    <property type="entry name" value="GIY-YIG_UvrC_Cho"/>
</dbReference>
<dbReference type="InterPro" id="IPR003583">
    <property type="entry name" value="Hlx-hairpin-Hlx_DNA-bd_motif"/>
</dbReference>
<dbReference type="InterPro" id="IPR010994">
    <property type="entry name" value="RuvA_2-like"/>
</dbReference>
<dbReference type="InterPro" id="IPR001943">
    <property type="entry name" value="UVR_dom"/>
</dbReference>
<dbReference type="InterPro" id="IPR036876">
    <property type="entry name" value="UVR_dom_sf"/>
</dbReference>
<dbReference type="InterPro" id="IPR050066">
    <property type="entry name" value="UvrABC_protein_C"/>
</dbReference>
<dbReference type="InterPro" id="IPR004791">
    <property type="entry name" value="UvrC"/>
</dbReference>
<dbReference type="InterPro" id="IPR001162">
    <property type="entry name" value="UvrC_RNase_H_dom"/>
</dbReference>
<dbReference type="InterPro" id="IPR038476">
    <property type="entry name" value="UvrC_RNase_H_dom_sf"/>
</dbReference>
<dbReference type="NCBIfam" id="NF001824">
    <property type="entry name" value="PRK00558.1-5"/>
    <property type="match status" value="1"/>
</dbReference>
<dbReference type="NCBIfam" id="TIGR00194">
    <property type="entry name" value="uvrC"/>
    <property type="match status" value="1"/>
</dbReference>
<dbReference type="PANTHER" id="PTHR30562:SF1">
    <property type="entry name" value="UVRABC SYSTEM PROTEIN C"/>
    <property type="match status" value="1"/>
</dbReference>
<dbReference type="PANTHER" id="PTHR30562">
    <property type="entry name" value="UVRC/OXIDOREDUCTASE"/>
    <property type="match status" value="1"/>
</dbReference>
<dbReference type="Pfam" id="PF01541">
    <property type="entry name" value="GIY-YIG"/>
    <property type="match status" value="1"/>
</dbReference>
<dbReference type="Pfam" id="PF14520">
    <property type="entry name" value="HHH_5"/>
    <property type="match status" value="1"/>
</dbReference>
<dbReference type="Pfam" id="PF02151">
    <property type="entry name" value="UVR"/>
    <property type="match status" value="1"/>
</dbReference>
<dbReference type="Pfam" id="PF22920">
    <property type="entry name" value="UvrC_RNaseH"/>
    <property type="match status" value="1"/>
</dbReference>
<dbReference type="Pfam" id="PF08459">
    <property type="entry name" value="UvrC_RNaseH_dom"/>
    <property type="match status" value="1"/>
</dbReference>
<dbReference type="SMART" id="SM00465">
    <property type="entry name" value="GIYc"/>
    <property type="match status" value="1"/>
</dbReference>
<dbReference type="SMART" id="SM00278">
    <property type="entry name" value="HhH1"/>
    <property type="match status" value="2"/>
</dbReference>
<dbReference type="SUPFAM" id="SSF46600">
    <property type="entry name" value="C-terminal UvrC-binding domain of UvrB"/>
    <property type="match status" value="1"/>
</dbReference>
<dbReference type="SUPFAM" id="SSF82771">
    <property type="entry name" value="GIY-YIG endonuclease"/>
    <property type="match status" value="1"/>
</dbReference>
<dbReference type="SUPFAM" id="SSF47781">
    <property type="entry name" value="RuvA domain 2-like"/>
    <property type="match status" value="1"/>
</dbReference>
<dbReference type="PROSITE" id="PS50164">
    <property type="entry name" value="GIY_YIG"/>
    <property type="match status" value="1"/>
</dbReference>
<dbReference type="PROSITE" id="PS50151">
    <property type="entry name" value="UVR"/>
    <property type="match status" value="1"/>
</dbReference>
<dbReference type="PROSITE" id="PS50165">
    <property type="entry name" value="UVRC"/>
    <property type="match status" value="1"/>
</dbReference>
<organism>
    <name type="scientific">Pseudomonas fluorescens (strain Pf0-1)</name>
    <dbReference type="NCBI Taxonomy" id="205922"/>
    <lineage>
        <taxon>Bacteria</taxon>
        <taxon>Pseudomonadati</taxon>
        <taxon>Pseudomonadota</taxon>
        <taxon>Gammaproteobacteria</taxon>
        <taxon>Pseudomonadales</taxon>
        <taxon>Pseudomonadaceae</taxon>
        <taxon>Pseudomonas</taxon>
    </lineage>
</organism>